<keyword id="KW-0479">Metal-binding</keyword>
<keyword id="KW-1185">Reference proteome</keyword>
<keyword id="KW-0677">Repeat</keyword>
<keyword id="KW-0862">Zinc</keyword>
<keyword id="KW-0863">Zinc-finger</keyword>
<organismHost>
    <name type="scientific">Magallana gigas</name>
    <name type="common">Pacific oyster</name>
    <name type="synonym">Crassostrea gigas</name>
    <dbReference type="NCBI Taxonomy" id="29159"/>
</organismHost>
<organismHost>
    <name type="scientific">Pecten maximus</name>
    <name type="common">King scallop</name>
    <name type="synonym">Pilgrim's clam</name>
    <dbReference type="NCBI Taxonomy" id="6579"/>
</organismHost>
<dbReference type="EMBL" id="AY509253">
    <property type="protein sequence ID" value="AAS00933.1"/>
    <property type="molecule type" value="Genomic_DNA"/>
</dbReference>
<dbReference type="RefSeq" id="YP_024586.1">
    <property type="nucleotide sequence ID" value="NC_005881.2"/>
</dbReference>
<dbReference type="KEGG" id="vg:2948190"/>
<dbReference type="Proteomes" id="UP000007021">
    <property type="component" value="Segment"/>
</dbReference>
<dbReference type="GO" id="GO:0008270">
    <property type="term" value="F:zinc ion binding"/>
    <property type="evidence" value="ECO:0007669"/>
    <property type="project" value="UniProtKB-KW"/>
</dbReference>
<dbReference type="CDD" id="cd00022">
    <property type="entry name" value="BIR"/>
    <property type="match status" value="2"/>
</dbReference>
<dbReference type="Gene3D" id="1.10.1170.10">
    <property type="entry name" value="Inhibitor Of Apoptosis Protein (2mihbC-IAP-1), Chain A"/>
    <property type="match status" value="2"/>
</dbReference>
<dbReference type="Gene3D" id="3.30.40.10">
    <property type="entry name" value="Zinc/RING finger domain, C3HC4 (zinc finger)"/>
    <property type="match status" value="1"/>
</dbReference>
<dbReference type="InterPro" id="IPR001370">
    <property type="entry name" value="BIR_rpt"/>
</dbReference>
<dbReference type="InterPro" id="IPR050784">
    <property type="entry name" value="IAP"/>
</dbReference>
<dbReference type="InterPro" id="IPR001841">
    <property type="entry name" value="Znf_RING"/>
</dbReference>
<dbReference type="InterPro" id="IPR013083">
    <property type="entry name" value="Znf_RING/FYVE/PHD"/>
</dbReference>
<dbReference type="PANTHER" id="PTHR10044">
    <property type="entry name" value="INHIBITOR OF APOPTOSIS"/>
    <property type="match status" value="1"/>
</dbReference>
<dbReference type="Pfam" id="PF00653">
    <property type="entry name" value="BIR"/>
    <property type="match status" value="2"/>
</dbReference>
<dbReference type="Pfam" id="PF13920">
    <property type="entry name" value="zf-C3HC4_3"/>
    <property type="match status" value="1"/>
</dbReference>
<dbReference type="SMART" id="SM00238">
    <property type="entry name" value="BIR"/>
    <property type="match status" value="2"/>
</dbReference>
<dbReference type="SMART" id="SM00184">
    <property type="entry name" value="RING"/>
    <property type="match status" value="1"/>
</dbReference>
<dbReference type="SUPFAM" id="SSF57924">
    <property type="entry name" value="Inhibitor of apoptosis (IAP) repeat"/>
    <property type="match status" value="3"/>
</dbReference>
<dbReference type="PROSITE" id="PS01282">
    <property type="entry name" value="BIR_REPEAT_1"/>
    <property type="match status" value="1"/>
</dbReference>
<dbReference type="PROSITE" id="PS50143">
    <property type="entry name" value="BIR_REPEAT_2"/>
    <property type="match status" value="2"/>
</dbReference>
<dbReference type="PROSITE" id="PS50089">
    <property type="entry name" value="ZF_RING_2"/>
    <property type="match status" value="1"/>
</dbReference>
<comment type="function">
    <text>May act as an apoptosis inhibitor.</text>
</comment>
<evidence type="ECO:0000255" key="1">
    <source>
        <dbReference type="PROSITE-ProRule" id="PRU00175"/>
    </source>
</evidence>
<evidence type="ECO:0000256" key="2">
    <source>
        <dbReference type="SAM" id="MobiDB-lite"/>
    </source>
</evidence>
<organism>
    <name type="scientific">Ostreid herpesvirus 1 (isolate France)</name>
    <name type="common">OsHV-1</name>
    <name type="synonym">Pacific oyster herpesvirus</name>
    <dbReference type="NCBI Taxonomy" id="654903"/>
    <lineage>
        <taxon>Viruses</taxon>
        <taxon>Duplodnaviria</taxon>
        <taxon>Heunggongvirae</taxon>
        <taxon>Peploviricota</taxon>
        <taxon>Herviviricetes</taxon>
        <taxon>Herpesvirales</taxon>
        <taxon>Malacoherpesviridae</taxon>
        <taxon>Ostreavirus</taxon>
        <taxon>Ostreavirus ostreidmalaco1</taxon>
        <taxon>Ostreid herpesvirus 1</taxon>
    </lineage>
</organism>
<gene>
    <name type="ORF">ORF42</name>
</gene>
<protein>
    <recommendedName>
        <fullName>Putative apoptosis inhibitor ORF42</fullName>
    </recommendedName>
</protein>
<sequence length="364" mass="42037">MGISELEYLPQTTVNALLQYDNVRLATFRGYEYATDQWKKYLSDTKFFKVGEVDQIQCVFCRMKTSIRNEERIKKHVADCREGVVSAPQQQPPPPPSTSIGAVGGDPRPEDMNVPERGWDPPMSKDPKSTFLGKWPHSEYISIDSMVAEGFEFIGPGDRVQCRHCKVILRNWETTDIPSSEHERNAPRCPLVVQRYLTRMREDDERRDRELKEVQQRRKMDMNKAFSQDMSKLENRIASLKFWPGPIRDIEKVARTGFFYTGEKDMLTCYACACKLINWEKNDDPIKEHKINFPHCANMADVKWSDVGFSNDEECVICLGAKADTILKPCLHYSLCYGCSTQVQKCPLCRKKIEKRVQTTNVLQ</sequence>
<accession>Q6R7I2</accession>
<proteinExistence type="predicted"/>
<feature type="chain" id="PRO_0000385025" description="Putative apoptosis inhibitor ORF42">
    <location>
        <begin position="1"/>
        <end position="364"/>
    </location>
</feature>
<feature type="repeat" description="BIR 1">
    <location>
        <begin position="24"/>
        <end position="89"/>
    </location>
</feature>
<feature type="repeat" description="BIR 2">
    <location>
        <begin position="127"/>
        <end position="193"/>
    </location>
</feature>
<feature type="repeat" description="BIR 3">
    <location>
        <begin position="236"/>
        <end position="300"/>
    </location>
</feature>
<feature type="zinc finger region" description="RING-type" evidence="1">
    <location>
        <begin position="315"/>
        <end position="350"/>
    </location>
</feature>
<feature type="region of interest" description="Disordered" evidence="2">
    <location>
        <begin position="83"/>
        <end position="126"/>
    </location>
</feature>
<feature type="compositionally biased region" description="Basic and acidic residues" evidence="2">
    <location>
        <begin position="117"/>
        <end position="126"/>
    </location>
</feature>
<reference key="1">
    <citation type="journal article" date="2005" name="J. Gen. Virol.">
        <title>A novel class of herpesvirus with bivalve hosts.</title>
        <authorList>
            <person name="Davison A.J."/>
            <person name="Trus B.L."/>
            <person name="Cheng N."/>
            <person name="Steven A.C."/>
            <person name="Watson M.S."/>
            <person name="Cunningham C."/>
            <person name="Le Deuff R.M."/>
            <person name="Renault T."/>
        </authorList>
    </citation>
    <scope>NUCLEOTIDE SEQUENCE [LARGE SCALE GENOMIC DNA]</scope>
</reference>
<name>IAP1_OSHVF</name>